<evidence type="ECO:0000250" key="1">
    <source>
        <dbReference type="UniProtKB" id="Q4WZ69"/>
    </source>
</evidence>
<evidence type="ECO:0000269" key="2">
    <source>
    </source>
</evidence>
<evidence type="ECO:0000269" key="3">
    <source>
    </source>
</evidence>
<evidence type="ECO:0000303" key="4">
    <source>
    </source>
</evidence>
<evidence type="ECO:0000305" key="5"/>
<evidence type="ECO:0000305" key="6">
    <source>
    </source>
</evidence>
<gene>
    <name evidence="4" type="primary">ifgF2</name>
    <name type="ORF">PROQFM164_S02g000304</name>
</gene>
<reference key="1">
    <citation type="journal article" date="2014" name="Nat. Commun.">
        <title>Multiple recent horizontal transfers of a large genomic region in cheese making fungi.</title>
        <authorList>
            <person name="Cheeseman K."/>
            <person name="Ropars J."/>
            <person name="Renault P."/>
            <person name="Dupont J."/>
            <person name="Gouzy J."/>
            <person name="Branca A."/>
            <person name="Abraham A.-L."/>
            <person name="Ceppi M."/>
            <person name="Conseiller E."/>
            <person name="Debuchy R."/>
            <person name="Malagnac F."/>
            <person name="Goarin A."/>
            <person name="Silar P."/>
            <person name="Lacoste S."/>
            <person name="Sallet E."/>
            <person name="Bensimon A."/>
            <person name="Giraud T."/>
            <person name="Brygoo Y."/>
        </authorList>
    </citation>
    <scope>NUCLEOTIDE SEQUENCE [LARGE SCALE GENOMIC DNA]</scope>
    <source>
        <strain>FM164</strain>
    </source>
</reference>
<reference key="2">
    <citation type="journal article" date="2017" name="Appl. Microbiol. Biotechnol.">
        <title>Silencing of a second dimethylallyltryptophan synthase of Penicillium roqueforti reveals a novel clavine alkaloid gene cluster.</title>
        <authorList>
            <person name="Fernandez-Bodega A."/>
            <person name="Alvarez-Alvarez R."/>
            <person name="Liras P."/>
            <person name="Martin J.F."/>
        </authorList>
    </citation>
    <scope>FUNCTION</scope>
    <scope>PATHWAY</scope>
</reference>
<reference key="3">
    <citation type="journal article" date="2017" name="Org. Biomol. Chem.">
        <title>A bifunctional old yellow enzyme from Penicillium roqueforti is involved in ergot alkaloid biosynthesis.</title>
        <authorList>
            <person name="Gerhards N."/>
            <person name="Li S.M."/>
        </authorList>
    </citation>
    <scope>FUNCTION</scope>
</reference>
<accession>W6Q1E9</accession>
<organism>
    <name type="scientific">Penicillium roqueforti (strain FM164)</name>
    <dbReference type="NCBI Taxonomy" id="1365484"/>
    <lineage>
        <taxon>Eukaryota</taxon>
        <taxon>Fungi</taxon>
        <taxon>Dikarya</taxon>
        <taxon>Ascomycota</taxon>
        <taxon>Pezizomycotina</taxon>
        <taxon>Eurotiomycetes</taxon>
        <taxon>Eurotiomycetidae</taxon>
        <taxon>Eurotiales</taxon>
        <taxon>Aspergillaceae</taxon>
        <taxon>Penicillium</taxon>
    </lineage>
</organism>
<feature type="chain" id="PRO_0000444544" description="Festuclavine synthase II">
    <location>
        <begin position="1"/>
        <end position="287"/>
    </location>
</feature>
<sequence>MTILVLGGRGKTASRLAALLDQAKTPFLVGSSSASPSDPYKSSQFNWLKRDTWERPFEQAGKHGLGTISSIYLVGPPVMDIAPPMIEFVDLARAKGVQRFVLLSASTVEKGGHSMGQVHAYLDSLAEVEYVALRPTWFMENLLEDPSREWIKNENQIITATGDGKIPFVSADDIASVAFHCLTEWGSHKTEYVILGPELLSYGQVAEILTTILGKKIIHRSLTETGLAELLVKKAGIPADFAAMLSAMEVDVKNGPQEVLNNSVVEVTGNPPRYFKDVAEHEKHVWA</sequence>
<keyword id="KW-0017">Alkaloid metabolism</keyword>
<keyword id="KW-0520">NAD</keyword>
<keyword id="KW-0560">Oxidoreductase</keyword>
<keyword id="KW-1185">Reference proteome</keyword>
<dbReference type="EC" id="1.5.1.44" evidence="1"/>
<dbReference type="EMBL" id="HG792016">
    <property type="protein sequence ID" value="CDM30155.1"/>
    <property type="molecule type" value="Genomic_DNA"/>
</dbReference>
<dbReference type="SMR" id="W6Q1E9"/>
<dbReference type="STRING" id="1365484.W6Q1E9"/>
<dbReference type="OMA" id="WTISRPG"/>
<dbReference type="OrthoDB" id="9997102at2759"/>
<dbReference type="UniPathway" id="UPA00327"/>
<dbReference type="Proteomes" id="UP000030686">
    <property type="component" value="Unassembled WGS sequence"/>
</dbReference>
<dbReference type="GO" id="GO:0016491">
    <property type="term" value="F:oxidoreductase activity"/>
    <property type="evidence" value="ECO:0007669"/>
    <property type="project" value="UniProtKB-KW"/>
</dbReference>
<dbReference type="GO" id="GO:0035835">
    <property type="term" value="P:indole alkaloid biosynthetic process"/>
    <property type="evidence" value="ECO:0007669"/>
    <property type="project" value="UniProtKB-UniPathway"/>
</dbReference>
<dbReference type="Gene3D" id="3.40.50.720">
    <property type="entry name" value="NAD(P)-binding Rossmann-like Domain"/>
    <property type="match status" value="1"/>
</dbReference>
<dbReference type="Gene3D" id="3.90.25.10">
    <property type="entry name" value="UDP-galactose 4-epimerase, domain 1"/>
    <property type="match status" value="1"/>
</dbReference>
<dbReference type="InterPro" id="IPR051604">
    <property type="entry name" value="Ergot_Alk_Oxidoreductase"/>
</dbReference>
<dbReference type="InterPro" id="IPR019901">
    <property type="entry name" value="Ergot_alkaloid_biosynthesis"/>
</dbReference>
<dbReference type="InterPro" id="IPR036291">
    <property type="entry name" value="NAD(P)-bd_dom_sf"/>
</dbReference>
<dbReference type="NCBIfam" id="TIGR03649">
    <property type="entry name" value="ergot_EASG"/>
    <property type="match status" value="1"/>
</dbReference>
<dbReference type="PANTHER" id="PTHR43162">
    <property type="match status" value="1"/>
</dbReference>
<dbReference type="PANTHER" id="PTHR43162:SF1">
    <property type="entry name" value="PRESTALK A DIFFERENTIATION PROTEIN A"/>
    <property type="match status" value="1"/>
</dbReference>
<dbReference type="SUPFAM" id="SSF51735">
    <property type="entry name" value="NAD(P)-binding Rossmann-fold domains"/>
    <property type="match status" value="1"/>
</dbReference>
<protein>
    <recommendedName>
        <fullName evidence="4">Festuclavine synthase II</fullName>
        <ecNumber evidence="1">1.5.1.44</ecNumber>
    </recommendedName>
    <alternativeName>
        <fullName evidence="4">Festuclavine dehydrogenase ifgF2</fullName>
    </alternativeName>
    <alternativeName>
        <fullName evidence="4">Isofumigaclavine biosynthesis cluster A protein F2</fullName>
    </alternativeName>
</protein>
<comment type="function">
    <text evidence="2 3">Festuclavine synthase; part of the gene cluster that mediates the biosynthesis of isofumigaclavines, fungal ergot alkaloids (PubMed:28620689). The tryptophan dimethylallyltransferase ifgA catalyzes the first step of ergot alkaloid biosynthesis by condensing dimethylallyl diphosphate (DMAP) and tryptophan to form 4-dimethylallyl-L-tryptophan (PubMed:28620689). The second step is catalyzed by the methyltransferase ifgB that methylates 4-dimethylallyl-L-tryptophan in the presence of S-adenosyl-L-methionine, resulting in the formation of N-methyl-dimethylallyl-L-tryptophan (PubMed:28620689). The catalase ifgD and the FAD-dependent oxidoreductase ifgC then transform N-methyl-dimethylallyl-L-tryptophan to chanoclavine-I which is further oxidized by ifgE in the presence of NAD(+), resulting in the formation of chanoclavine-I aldehyde (PubMed:28902217). The chanoclavine-I aldehyde reductases ifgG and/or fgaOx3 reduce chanoclavine-I aldehyde to dihydrochanoclavine-I aldehyde that spontaneously dehydrates to form 6,8-dimethyl-6,7-didehydroergoline (PubMed:28620689, PubMed:28902217). The festuclavine dehydrogenases ifgF1 and/or ifgF2 then catalyze the reduction of 6,8-dimethyl-6,7-didehydroergoline to form festuclavine (PubMed:28620689). Hydrolysis of festuclavine by a yet undetermined cytochrome P450 monooxygenase (called ifgH) then leads to the formation of isofumigaclavine B which is in turn acetylated by ifgI to isofumigaclavine A (PubMed:28620689). Penicillium roqueforti has interestingly at least two sets of genes for the consumption of chanoclavine-I aldehyde on three different loci, the OYEs ifgG/fgaOx3 and the festuclavine synthase homologs ifgF1/ifgF2 (PubMed:28620689, PubMed:28902217). The reason for the duplication of these genes is unclear, probably to ensure the conversion of chanoclavine-I aldehyde by differential gene expression under various environmental conditions (PubMed:28902217).</text>
</comment>
<comment type="catalytic activity">
    <reaction evidence="1">
        <text>festuclavine + NAD(+) = 6,8-dimethyl-6,7-didehydroergoline + NADH + H(+)</text>
        <dbReference type="Rhea" id="RHEA:34055"/>
        <dbReference type="ChEBI" id="CHEBI:15378"/>
        <dbReference type="ChEBI" id="CHEBI:57540"/>
        <dbReference type="ChEBI" id="CHEBI:57945"/>
        <dbReference type="ChEBI" id="CHEBI:65034"/>
        <dbReference type="ChEBI" id="CHEBI:65045"/>
        <dbReference type="EC" id="1.5.1.44"/>
    </reaction>
</comment>
<comment type="pathway">
    <text evidence="6">Alkaloid biosynthesis; ergot alkaloid biosynthesis.</text>
</comment>
<comment type="similarity">
    <text evidence="5">Belongs to the fgaFS/easG family.</text>
</comment>
<proteinExistence type="inferred from homology"/>
<name>IFGF2_PENRF</name>